<proteinExistence type="inferred from homology"/>
<name>NU2C_SILLA</name>
<comment type="function">
    <text evidence="1">NDH shuttles electrons from NAD(P)H:plastoquinone, via FMN and iron-sulfur (Fe-S) centers, to quinones in the photosynthetic chain and possibly in a chloroplast respiratory chain. The immediate electron acceptor for the enzyme in this species is believed to be plastoquinone. Couples the redox reaction to proton translocation, and thus conserves the redox energy in a proton gradient.</text>
</comment>
<comment type="catalytic activity">
    <reaction evidence="1">
        <text>a plastoquinone + NADH + (n+1) H(+)(in) = a plastoquinol + NAD(+) + n H(+)(out)</text>
        <dbReference type="Rhea" id="RHEA:42608"/>
        <dbReference type="Rhea" id="RHEA-COMP:9561"/>
        <dbReference type="Rhea" id="RHEA-COMP:9562"/>
        <dbReference type="ChEBI" id="CHEBI:15378"/>
        <dbReference type="ChEBI" id="CHEBI:17757"/>
        <dbReference type="ChEBI" id="CHEBI:57540"/>
        <dbReference type="ChEBI" id="CHEBI:57945"/>
        <dbReference type="ChEBI" id="CHEBI:62192"/>
    </reaction>
</comment>
<comment type="catalytic activity">
    <reaction evidence="1">
        <text>a plastoquinone + NADPH + (n+1) H(+)(in) = a plastoquinol + NADP(+) + n H(+)(out)</text>
        <dbReference type="Rhea" id="RHEA:42612"/>
        <dbReference type="Rhea" id="RHEA-COMP:9561"/>
        <dbReference type="Rhea" id="RHEA-COMP:9562"/>
        <dbReference type="ChEBI" id="CHEBI:15378"/>
        <dbReference type="ChEBI" id="CHEBI:17757"/>
        <dbReference type="ChEBI" id="CHEBI:57783"/>
        <dbReference type="ChEBI" id="CHEBI:58349"/>
        <dbReference type="ChEBI" id="CHEBI:62192"/>
    </reaction>
</comment>
<comment type="subunit">
    <text evidence="1">NDH is composed of at least 16 different subunits, 5 of which are encoded in the nucleus.</text>
</comment>
<comment type="subcellular location">
    <subcellularLocation>
        <location evidence="1">Plastid</location>
        <location evidence="1">Chloroplast thylakoid membrane</location>
        <topology evidence="1">Multi-pass membrane protein</topology>
    </subcellularLocation>
</comment>
<comment type="similarity">
    <text evidence="1">Belongs to the complex I subunit 2 family.</text>
</comment>
<comment type="sequence caution" evidence="2">
    <conflict type="erroneous gene model prediction">
        <sequence resource="EMBL-CDS" id="BAD93472"/>
    </conflict>
</comment>
<protein>
    <recommendedName>
        <fullName evidence="1">NAD(P)H-quinone oxidoreductase subunit 2, chloroplastic</fullName>
        <ecNumber evidence="1">7.1.1.-</ecNumber>
    </recommendedName>
    <alternativeName>
        <fullName evidence="1">NAD(P)H dehydrogenase, subunit 2</fullName>
    </alternativeName>
    <alternativeName>
        <fullName evidence="1">NADH-plastoquinone oxidoreductase subunit 2</fullName>
    </alternativeName>
</protein>
<geneLocation type="chloroplast"/>
<organism>
    <name type="scientific">Silene latifolia</name>
    <name type="common">White campion</name>
    <name type="synonym">Bladder campion</name>
    <dbReference type="NCBI Taxonomy" id="37657"/>
    <lineage>
        <taxon>Eukaryota</taxon>
        <taxon>Viridiplantae</taxon>
        <taxon>Streptophyta</taxon>
        <taxon>Embryophyta</taxon>
        <taxon>Tracheophyta</taxon>
        <taxon>Spermatophyta</taxon>
        <taxon>Magnoliopsida</taxon>
        <taxon>eudicotyledons</taxon>
        <taxon>Gunneridae</taxon>
        <taxon>Pentapetalae</taxon>
        <taxon>Caryophyllales</taxon>
        <taxon>Caryophyllaceae</taxon>
        <taxon>Sileneae</taxon>
        <taxon>Silene</taxon>
        <taxon>Silene subgen. Behenantha</taxon>
        <taxon>Silene sect. Melandrium</taxon>
    </lineage>
</organism>
<sequence>MIWHVQNENFILDSTRIFMKAFHLLLFDGSFIFPECILIFGLILLLIIDSTSDQKDIPWLYFISSTSLVMSITTLLFRWREEPMISFSGNFQTNNFNEIFQFLILLCSTLCIPLSVEYIECTEMALTEFLLFVLTATLGGMFLCGANDLITIFVAPECFSLCSYLLSGYTKKDVRSNEATTKYLLMGGTSSSILVHGFSWLYGSSGGEIELQEIVNGLINTQMYNSPGISIALIFITVGIGFKLSPAPSHQWTPDVYEGSPTPVVAFLSVTSKVAASASATRIFDIPFYFSSNEWHLLLEILAILSMILGNLIAITQTSMKRMLAYSSIGQIGYVIIGIIVGDSNDGYASMITYMLFYISMNLGTFACIVLFGLRTGTDNIRDYAGLYTKDPFLALSLALCLLSLGGLPPLAGFFGKLYLFWCGWQAGLYLLVLIGLLTSVLSIYYYLKIIKLLMTGRNQEITPHVRNYRRSPLRSKNSIELSMIVCVIASTIPGISMNPIIAIAQDTLF</sequence>
<dbReference type="EC" id="7.1.1.-" evidence="1"/>
<dbReference type="EMBL" id="AB189069">
    <property type="protein sequence ID" value="BAD93472.1"/>
    <property type="status" value="ALT_SEQ"/>
    <property type="molecule type" value="Genomic_DNA"/>
</dbReference>
<dbReference type="RefSeq" id="YP_005089619.1">
    <property type="nucleotide sequence ID" value="NC_016730.1"/>
</dbReference>
<dbReference type="RefSeq" id="YP_005089634.1">
    <property type="nucleotide sequence ID" value="NC_016730.1"/>
</dbReference>
<dbReference type="SMR" id="Q589A5"/>
<dbReference type="GeneID" id="11541119"/>
<dbReference type="GeneID" id="11541153"/>
<dbReference type="GO" id="GO:0009535">
    <property type="term" value="C:chloroplast thylakoid membrane"/>
    <property type="evidence" value="ECO:0007669"/>
    <property type="project" value="UniProtKB-SubCell"/>
</dbReference>
<dbReference type="GO" id="GO:0008137">
    <property type="term" value="F:NADH dehydrogenase (ubiquinone) activity"/>
    <property type="evidence" value="ECO:0007669"/>
    <property type="project" value="InterPro"/>
</dbReference>
<dbReference type="GO" id="GO:0048038">
    <property type="term" value="F:quinone binding"/>
    <property type="evidence" value="ECO:0007669"/>
    <property type="project" value="UniProtKB-KW"/>
</dbReference>
<dbReference type="GO" id="GO:0042773">
    <property type="term" value="P:ATP synthesis coupled electron transport"/>
    <property type="evidence" value="ECO:0007669"/>
    <property type="project" value="InterPro"/>
</dbReference>
<dbReference type="GO" id="GO:0019684">
    <property type="term" value="P:photosynthesis, light reaction"/>
    <property type="evidence" value="ECO:0007669"/>
    <property type="project" value="UniProtKB-UniRule"/>
</dbReference>
<dbReference type="HAMAP" id="MF_00445">
    <property type="entry name" value="NDH1_NuoN_1"/>
    <property type="match status" value="1"/>
</dbReference>
<dbReference type="InterPro" id="IPR010096">
    <property type="entry name" value="NADH-Q_OxRdtase_suN/2"/>
</dbReference>
<dbReference type="InterPro" id="IPR001750">
    <property type="entry name" value="ND/Mrp_TM"/>
</dbReference>
<dbReference type="InterPro" id="IPR045693">
    <property type="entry name" value="Ndh2_N"/>
</dbReference>
<dbReference type="NCBIfam" id="TIGR01770">
    <property type="entry name" value="NDH_I_N"/>
    <property type="match status" value="1"/>
</dbReference>
<dbReference type="NCBIfam" id="NF002701">
    <property type="entry name" value="PRK02504.1"/>
    <property type="match status" value="1"/>
</dbReference>
<dbReference type="PANTHER" id="PTHR22773">
    <property type="entry name" value="NADH DEHYDROGENASE"/>
    <property type="match status" value="1"/>
</dbReference>
<dbReference type="Pfam" id="PF19530">
    <property type="entry name" value="Ndh2_N"/>
    <property type="match status" value="1"/>
</dbReference>
<dbReference type="Pfam" id="PF00361">
    <property type="entry name" value="Proton_antipo_M"/>
    <property type="match status" value="1"/>
</dbReference>
<dbReference type="PRINTS" id="PR01434">
    <property type="entry name" value="NADHDHGNASE5"/>
</dbReference>
<keyword id="KW-0150">Chloroplast</keyword>
<keyword id="KW-0472">Membrane</keyword>
<keyword id="KW-0520">NAD</keyword>
<keyword id="KW-0521">NADP</keyword>
<keyword id="KW-0934">Plastid</keyword>
<keyword id="KW-0618">Plastoquinone</keyword>
<keyword id="KW-0874">Quinone</keyword>
<keyword id="KW-0793">Thylakoid</keyword>
<keyword id="KW-1278">Translocase</keyword>
<keyword id="KW-0812">Transmembrane</keyword>
<keyword id="KW-1133">Transmembrane helix</keyword>
<keyword id="KW-0813">Transport</keyword>
<reference key="1">
    <citation type="submission" date="2004-08" db="EMBL/GenBank/DDBJ databases">
        <title>A partial chloroplast genome of Silene latifolia.</title>
        <authorList>
            <person name="Kejnovsky E."/>
            <person name="Kubat Z."/>
            <person name="Hobza R."/>
            <person name="Lengerova M."/>
            <person name="Sato S."/>
            <person name="Tabata S."/>
            <person name="Fukui K."/>
            <person name="Matsunaga S."/>
            <person name="Vyskot B."/>
        </authorList>
    </citation>
    <scope>NUCLEOTIDE SEQUENCE [GENOMIC DNA]</scope>
</reference>
<feature type="chain" id="PRO_0000225349" description="NAD(P)H-quinone oxidoreductase subunit 2, chloroplastic">
    <location>
        <begin position="1"/>
        <end position="510"/>
    </location>
</feature>
<feature type="transmembrane region" description="Helical" evidence="1">
    <location>
        <begin position="28"/>
        <end position="48"/>
    </location>
</feature>
<feature type="transmembrane region" description="Helical" evidence="1">
    <location>
        <begin position="57"/>
        <end position="77"/>
    </location>
</feature>
<feature type="transmembrane region" description="Helical" evidence="1">
    <location>
        <begin position="99"/>
        <end position="119"/>
    </location>
</feature>
<feature type="transmembrane region" description="Helical" evidence="1">
    <location>
        <begin position="124"/>
        <end position="144"/>
    </location>
</feature>
<feature type="transmembrane region" description="Helical" evidence="1">
    <location>
        <begin position="149"/>
        <end position="169"/>
    </location>
</feature>
<feature type="transmembrane region" description="Helical" evidence="1">
    <location>
        <begin position="183"/>
        <end position="203"/>
    </location>
</feature>
<feature type="transmembrane region" description="Helical" evidence="1">
    <location>
        <begin position="227"/>
        <end position="247"/>
    </location>
</feature>
<feature type="transmembrane region" description="Helical" evidence="1">
    <location>
        <begin position="295"/>
        <end position="315"/>
    </location>
</feature>
<feature type="transmembrane region" description="Helical" evidence="1">
    <location>
        <begin position="323"/>
        <end position="343"/>
    </location>
</feature>
<feature type="transmembrane region" description="Helical" evidence="1">
    <location>
        <begin position="354"/>
        <end position="374"/>
    </location>
</feature>
<feature type="transmembrane region" description="Helical" evidence="1">
    <location>
        <begin position="395"/>
        <end position="415"/>
    </location>
</feature>
<feature type="transmembrane region" description="Helical" evidence="1">
    <location>
        <begin position="418"/>
        <end position="438"/>
    </location>
</feature>
<feature type="transmembrane region" description="Helical" evidence="1">
    <location>
        <begin position="484"/>
        <end position="504"/>
    </location>
</feature>
<evidence type="ECO:0000255" key="1">
    <source>
        <dbReference type="HAMAP-Rule" id="MF_00445"/>
    </source>
</evidence>
<evidence type="ECO:0000305" key="2"/>
<accession>Q589A5</accession>
<gene>
    <name evidence="1" type="primary">ndhB</name>
</gene>